<keyword id="KW-0067">ATP-binding</keyword>
<keyword id="KW-0143">Chaperone</keyword>
<keyword id="KW-0479">Metal-binding</keyword>
<keyword id="KW-0547">Nucleotide-binding</keyword>
<keyword id="KW-1185">Reference proteome</keyword>
<keyword id="KW-0862">Zinc</keyword>
<gene>
    <name evidence="1" type="primary">clpX</name>
    <name type="ordered locus">Avi_1698</name>
</gene>
<name>CLPX_ALLAM</name>
<protein>
    <recommendedName>
        <fullName evidence="1">ATP-dependent Clp protease ATP-binding subunit ClpX</fullName>
    </recommendedName>
</protein>
<evidence type="ECO:0000255" key="1">
    <source>
        <dbReference type="HAMAP-Rule" id="MF_00175"/>
    </source>
</evidence>
<evidence type="ECO:0000255" key="2">
    <source>
        <dbReference type="PROSITE-ProRule" id="PRU01250"/>
    </source>
</evidence>
<dbReference type="EMBL" id="CP000633">
    <property type="protein sequence ID" value="ACM36216.1"/>
    <property type="molecule type" value="Genomic_DNA"/>
</dbReference>
<dbReference type="RefSeq" id="WP_015915639.1">
    <property type="nucleotide sequence ID" value="NC_011989.1"/>
</dbReference>
<dbReference type="SMR" id="B9JVD6"/>
<dbReference type="STRING" id="311402.Avi_1698"/>
<dbReference type="GeneID" id="60682293"/>
<dbReference type="KEGG" id="avi:Avi_1698"/>
<dbReference type="eggNOG" id="COG1219">
    <property type="taxonomic scope" value="Bacteria"/>
</dbReference>
<dbReference type="HOGENOM" id="CLU_014218_8_2_5"/>
<dbReference type="Proteomes" id="UP000001596">
    <property type="component" value="Chromosome 1"/>
</dbReference>
<dbReference type="GO" id="GO:0009376">
    <property type="term" value="C:HslUV protease complex"/>
    <property type="evidence" value="ECO:0007669"/>
    <property type="project" value="TreeGrafter"/>
</dbReference>
<dbReference type="GO" id="GO:0005524">
    <property type="term" value="F:ATP binding"/>
    <property type="evidence" value="ECO:0007669"/>
    <property type="project" value="UniProtKB-UniRule"/>
</dbReference>
<dbReference type="GO" id="GO:0016887">
    <property type="term" value="F:ATP hydrolysis activity"/>
    <property type="evidence" value="ECO:0007669"/>
    <property type="project" value="InterPro"/>
</dbReference>
<dbReference type="GO" id="GO:0140662">
    <property type="term" value="F:ATP-dependent protein folding chaperone"/>
    <property type="evidence" value="ECO:0007669"/>
    <property type="project" value="InterPro"/>
</dbReference>
<dbReference type="GO" id="GO:0046983">
    <property type="term" value="F:protein dimerization activity"/>
    <property type="evidence" value="ECO:0007669"/>
    <property type="project" value="InterPro"/>
</dbReference>
<dbReference type="GO" id="GO:0051082">
    <property type="term" value="F:unfolded protein binding"/>
    <property type="evidence" value="ECO:0007669"/>
    <property type="project" value="UniProtKB-UniRule"/>
</dbReference>
<dbReference type="GO" id="GO:0008270">
    <property type="term" value="F:zinc ion binding"/>
    <property type="evidence" value="ECO:0007669"/>
    <property type="project" value="InterPro"/>
</dbReference>
<dbReference type="GO" id="GO:0051301">
    <property type="term" value="P:cell division"/>
    <property type="evidence" value="ECO:0007669"/>
    <property type="project" value="TreeGrafter"/>
</dbReference>
<dbReference type="GO" id="GO:0051603">
    <property type="term" value="P:proteolysis involved in protein catabolic process"/>
    <property type="evidence" value="ECO:0007669"/>
    <property type="project" value="TreeGrafter"/>
</dbReference>
<dbReference type="CDD" id="cd19497">
    <property type="entry name" value="RecA-like_ClpX"/>
    <property type="match status" value="1"/>
</dbReference>
<dbReference type="FunFam" id="1.10.8.60:FF:000002">
    <property type="entry name" value="ATP-dependent Clp protease ATP-binding subunit ClpX"/>
    <property type="match status" value="1"/>
</dbReference>
<dbReference type="FunFam" id="3.40.50.300:FF:000005">
    <property type="entry name" value="ATP-dependent Clp protease ATP-binding subunit ClpX"/>
    <property type="match status" value="1"/>
</dbReference>
<dbReference type="Gene3D" id="1.10.8.60">
    <property type="match status" value="1"/>
</dbReference>
<dbReference type="Gene3D" id="6.20.220.10">
    <property type="entry name" value="ClpX chaperone, C4-type zinc finger domain"/>
    <property type="match status" value="1"/>
</dbReference>
<dbReference type="Gene3D" id="3.40.50.300">
    <property type="entry name" value="P-loop containing nucleotide triphosphate hydrolases"/>
    <property type="match status" value="1"/>
</dbReference>
<dbReference type="HAMAP" id="MF_00175">
    <property type="entry name" value="ClpX"/>
    <property type="match status" value="1"/>
</dbReference>
<dbReference type="InterPro" id="IPR003593">
    <property type="entry name" value="AAA+_ATPase"/>
</dbReference>
<dbReference type="InterPro" id="IPR050052">
    <property type="entry name" value="ATP-dep_Clp_protease_ClpX"/>
</dbReference>
<dbReference type="InterPro" id="IPR003959">
    <property type="entry name" value="ATPase_AAA_core"/>
</dbReference>
<dbReference type="InterPro" id="IPR019489">
    <property type="entry name" value="Clp_ATPase_C"/>
</dbReference>
<dbReference type="InterPro" id="IPR004487">
    <property type="entry name" value="Clp_protease_ATP-bd_su_ClpX"/>
</dbReference>
<dbReference type="InterPro" id="IPR046425">
    <property type="entry name" value="ClpX_bact"/>
</dbReference>
<dbReference type="InterPro" id="IPR027417">
    <property type="entry name" value="P-loop_NTPase"/>
</dbReference>
<dbReference type="InterPro" id="IPR010603">
    <property type="entry name" value="Znf_CppX_C4"/>
</dbReference>
<dbReference type="InterPro" id="IPR038366">
    <property type="entry name" value="Znf_CppX_C4_sf"/>
</dbReference>
<dbReference type="NCBIfam" id="TIGR00382">
    <property type="entry name" value="clpX"/>
    <property type="match status" value="1"/>
</dbReference>
<dbReference type="NCBIfam" id="NF003745">
    <property type="entry name" value="PRK05342.1"/>
    <property type="match status" value="1"/>
</dbReference>
<dbReference type="PANTHER" id="PTHR48102:SF7">
    <property type="entry name" value="ATP-DEPENDENT CLP PROTEASE ATP-BINDING SUBUNIT CLPX-LIKE, MITOCHONDRIAL"/>
    <property type="match status" value="1"/>
</dbReference>
<dbReference type="PANTHER" id="PTHR48102">
    <property type="entry name" value="ATP-DEPENDENT CLP PROTEASE ATP-BINDING SUBUNIT CLPX-LIKE, MITOCHONDRIAL-RELATED"/>
    <property type="match status" value="1"/>
</dbReference>
<dbReference type="Pfam" id="PF07724">
    <property type="entry name" value="AAA_2"/>
    <property type="match status" value="1"/>
</dbReference>
<dbReference type="Pfam" id="PF10431">
    <property type="entry name" value="ClpB_D2-small"/>
    <property type="match status" value="1"/>
</dbReference>
<dbReference type="Pfam" id="PF06689">
    <property type="entry name" value="zf-C4_ClpX"/>
    <property type="match status" value="1"/>
</dbReference>
<dbReference type="SMART" id="SM00382">
    <property type="entry name" value="AAA"/>
    <property type="match status" value="1"/>
</dbReference>
<dbReference type="SMART" id="SM01086">
    <property type="entry name" value="ClpB_D2-small"/>
    <property type="match status" value="1"/>
</dbReference>
<dbReference type="SMART" id="SM00994">
    <property type="entry name" value="zf-C4_ClpX"/>
    <property type="match status" value="1"/>
</dbReference>
<dbReference type="SUPFAM" id="SSF57716">
    <property type="entry name" value="Glucocorticoid receptor-like (DNA-binding domain)"/>
    <property type="match status" value="1"/>
</dbReference>
<dbReference type="SUPFAM" id="SSF52540">
    <property type="entry name" value="P-loop containing nucleoside triphosphate hydrolases"/>
    <property type="match status" value="1"/>
</dbReference>
<dbReference type="PROSITE" id="PS51902">
    <property type="entry name" value="CLPX_ZB"/>
    <property type="match status" value="1"/>
</dbReference>
<organism>
    <name type="scientific">Allorhizobium ampelinum (strain ATCC BAA-846 / DSM 112012 / S4)</name>
    <name type="common">Agrobacterium vitis (strain S4)</name>
    <dbReference type="NCBI Taxonomy" id="311402"/>
    <lineage>
        <taxon>Bacteria</taxon>
        <taxon>Pseudomonadati</taxon>
        <taxon>Pseudomonadota</taxon>
        <taxon>Alphaproteobacteria</taxon>
        <taxon>Hyphomicrobiales</taxon>
        <taxon>Rhizobiaceae</taxon>
        <taxon>Rhizobium/Agrobacterium group</taxon>
        <taxon>Allorhizobium</taxon>
        <taxon>Allorhizobium ampelinum</taxon>
    </lineage>
</organism>
<reference key="1">
    <citation type="journal article" date="2009" name="J. Bacteriol.">
        <title>Genome sequences of three Agrobacterium biovars help elucidate the evolution of multichromosome genomes in bacteria.</title>
        <authorList>
            <person name="Slater S.C."/>
            <person name="Goldman B.S."/>
            <person name="Goodner B."/>
            <person name="Setubal J.C."/>
            <person name="Farrand S.K."/>
            <person name="Nester E.W."/>
            <person name="Burr T.J."/>
            <person name="Banta L."/>
            <person name="Dickerman A.W."/>
            <person name="Paulsen I."/>
            <person name="Otten L."/>
            <person name="Suen G."/>
            <person name="Welch R."/>
            <person name="Almeida N.F."/>
            <person name="Arnold F."/>
            <person name="Burton O.T."/>
            <person name="Du Z."/>
            <person name="Ewing A."/>
            <person name="Godsy E."/>
            <person name="Heisel S."/>
            <person name="Houmiel K.L."/>
            <person name="Jhaveri J."/>
            <person name="Lu J."/>
            <person name="Miller N.M."/>
            <person name="Norton S."/>
            <person name="Chen Q."/>
            <person name="Phoolcharoen W."/>
            <person name="Ohlin V."/>
            <person name="Ondrusek D."/>
            <person name="Pride N."/>
            <person name="Stricklin S.L."/>
            <person name="Sun J."/>
            <person name="Wheeler C."/>
            <person name="Wilson L."/>
            <person name="Zhu H."/>
            <person name="Wood D.W."/>
        </authorList>
    </citation>
    <scope>NUCLEOTIDE SEQUENCE [LARGE SCALE GENOMIC DNA]</scope>
    <source>
        <strain>ATCC BAA-846 / DSM 112012 / S4</strain>
    </source>
</reference>
<proteinExistence type="inferred from homology"/>
<comment type="function">
    <text evidence="1">ATP-dependent specificity component of the Clp protease. It directs the protease to specific substrates. Can perform chaperone functions in the absence of ClpP.</text>
</comment>
<comment type="subunit">
    <text evidence="1">Component of the ClpX-ClpP complex. Forms a hexameric ring that, in the presence of ATP, binds to fourteen ClpP subunits assembled into a disk-like structure with a central cavity, resembling the structure of eukaryotic proteasomes.</text>
</comment>
<comment type="similarity">
    <text evidence="1">Belongs to the ClpX chaperone family.</text>
</comment>
<accession>B9JVD6</accession>
<sequence length="425" mass="46836">MSKVSGSNGGDSKNTLYCSFCGKSQHEVRKLIAGPTVFICDECVELCMDIIREENKSSMVKSRDGVPTPQDIIKILDEYVIGQRQAKKILSVAVHNHYKRLSHASKGGDVELAKSNILLVGPTGCGKTYLAQTLARIIDVPFTMADATTLTEAGYVGEDVENIILKLLQSADYNVERAQRGIVYIDEVDKISRKSDNPSITRDVSGEGVQQALLKIMEGTVASVPPQGGRKHPQQEFLQVDTTNILFICGGAFAGLDKIISARGEKTSIGFGATVVSPEDRRVGEVLRELEPEDLVKFGLIPEFIGRLPVLATLEDLDEDALIQILSEPKNALVKQYQRLFEMEDVELSFHEDALREIARKAITRKTGARGLRSIMEKILLDTMFELPELEGVREVVISDEVVRGAARPLYIYADRQEEKANASA</sequence>
<feature type="chain" id="PRO_1000123815" description="ATP-dependent Clp protease ATP-binding subunit ClpX">
    <location>
        <begin position="1"/>
        <end position="425"/>
    </location>
</feature>
<feature type="domain" description="ClpX-type ZB" evidence="2">
    <location>
        <begin position="6"/>
        <end position="59"/>
    </location>
</feature>
<feature type="binding site" evidence="2">
    <location>
        <position position="18"/>
    </location>
    <ligand>
        <name>Zn(2+)</name>
        <dbReference type="ChEBI" id="CHEBI:29105"/>
    </ligand>
</feature>
<feature type="binding site" evidence="2">
    <location>
        <position position="21"/>
    </location>
    <ligand>
        <name>Zn(2+)</name>
        <dbReference type="ChEBI" id="CHEBI:29105"/>
    </ligand>
</feature>
<feature type="binding site" evidence="2">
    <location>
        <position position="40"/>
    </location>
    <ligand>
        <name>Zn(2+)</name>
        <dbReference type="ChEBI" id="CHEBI:29105"/>
    </ligand>
</feature>
<feature type="binding site" evidence="2">
    <location>
        <position position="43"/>
    </location>
    <ligand>
        <name>Zn(2+)</name>
        <dbReference type="ChEBI" id="CHEBI:29105"/>
    </ligand>
</feature>
<feature type="binding site" evidence="1">
    <location>
        <begin position="122"/>
        <end position="129"/>
    </location>
    <ligand>
        <name>ATP</name>
        <dbReference type="ChEBI" id="CHEBI:30616"/>
    </ligand>
</feature>